<sequence>MSNDPTHQFLIQKIVPIEVGGIDFSFTNASLFMAASAAVAVGFLYFATSNRAIVPGRSQSVAEMSYEFIANMLKEGAGKQGMKFFPLVFSLFMFVLTANLLGMFPYFFTVTSQIIVTFALAILVIGTVLVYGFYKHGFHFLNVFVPSGVPGILLPLVVAIEIISFLSRPISLSVRLFANMLAGHITLKVFAGFVASLGALGAVGVGGAVLPLIMTVALTGLEFLVAFLQAYVFAVLTCMYLNDAIHPGGH</sequence>
<keyword id="KW-0066">ATP synthesis</keyword>
<keyword id="KW-0997">Cell inner membrane</keyword>
<keyword id="KW-1003">Cell membrane</keyword>
<keyword id="KW-0138">CF(0)</keyword>
<keyword id="KW-0375">Hydrogen ion transport</keyword>
<keyword id="KW-0406">Ion transport</keyword>
<keyword id="KW-0472">Membrane</keyword>
<keyword id="KW-0812">Transmembrane</keyword>
<keyword id="KW-1133">Transmembrane helix</keyword>
<keyword id="KW-0813">Transport</keyword>
<dbReference type="EMBL" id="CP001074">
    <property type="protein sequence ID" value="ACE89939.1"/>
    <property type="molecule type" value="Genomic_DNA"/>
</dbReference>
<dbReference type="SMR" id="B3PRF6"/>
<dbReference type="KEGG" id="rec:RHECIAT_CH0000954"/>
<dbReference type="eggNOG" id="COG0356">
    <property type="taxonomic scope" value="Bacteria"/>
</dbReference>
<dbReference type="HOGENOM" id="CLU_041018_0_2_5"/>
<dbReference type="Proteomes" id="UP000008817">
    <property type="component" value="Chromosome"/>
</dbReference>
<dbReference type="GO" id="GO:0005886">
    <property type="term" value="C:plasma membrane"/>
    <property type="evidence" value="ECO:0007669"/>
    <property type="project" value="UniProtKB-SubCell"/>
</dbReference>
<dbReference type="GO" id="GO:0045259">
    <property type="term" value="C:proton-transporting ATP synthase complex"/>
    <property type="evidence" value="ECO:0007669"/>
    <property type="project" value="UniProtKB-KW"/>
</dbReference>
<dbReference type="GO" id="GO:0046933">
    <property type="term" value="F:proton-transporting ATP synthase activity, rotational mechanism"/>
    <property type="evidence" value="ECO:0007669"/>
    <property type="project" value="UniProtKB-UniRule"/>
</dbReference>
<dbReference type="CDD" id="cd00310">
    <property type="entry name" value="ATP-synt_Fo_a_6"/>
    <property type="match status" value="1"/>
</dbReference>
<dbReference type="FunFam" id="1.20.120.220:FF:000003">
    <property type="entry name" value="ATP synthase subunit a"/>
    <property type="match status" value="1"/>
</dbReference>
<dbReference type="Gene3D" id="1.20.120.220">
    <property type="entry name" value="ATP synthase, F0 complex, subunit A"/>
    <property type="match status" value="1"/>
</dbReference>
<dbReference type="HAMAP" id="MF_01393">
    <property type="entry name" value="ATP_synth_a_bact"/>
    <property type="match status" value="1"/>
</dbReference>
<dbReference type="InterPro" id="IPR000568">
    <property type="entry name" value="ATP_synth_F0_asu"/>
</dbReference>
<dbReference type="InterPro" id="IPR023011">
    <property type="entry name" value="ATP_synth_F0_asu_AS"/>
</dbReference>
<dbReference type="InterPro" id="IPR045083">
    <property type="entry name" value="ATP_synth_F0_asu_bact/mt"/>
</dbReference>
<dbReference type="InterPro" id="IPR035908">
    <property type="entry name" value="F0_ATP_A_sf"/>
</dbReference>
<dbReference type="NCBIfam" id="TIGR01131">
    <property type="entry name" value="ATP_synt_6_or_A"/>
    <property type="match status" value="1"/>
</dbReference>
<dbReference type="NCBIfam" id="NF004482">
    <property type="entry name" value="PRK05815.2-4"/>
    <property type="match status" value="1"/>
</dbReference>
<dbReference type="PANTHER" id="PTHR11410">
    <property type="entry name" value="ATP SYNTHASE SUBUNIT A"/>
    <property type="match status" value="1"/>
</dbReference>
<dbReference type="PANTHER" id="PTHR11410:SF0">
    <property type="entry name" value="ATP SYNTHASE SUBUNIT A"/>
    <property type="match status" value="1"/>
</dbReference>
<dbReference type="Pfam" id="PF00119">
    <property type="entry name" value="ATP-synt_A"/>
    <property type="match status" value="1"/>
</dbReference>
<dbReference type="PRINTS" id="PR00123">
    <property type="entry name" value="ATPASEA"/>
</dbReference>
<dbReference type="SUPFAM" id="SSF81336">
    <property type="entry name" value="F1F0 ATP synthase subunit A"/>
    <property type="match status" value="1"/>
</dbReference>
<dbReference type="PROSITE" id="PS00449">
    <property type="entry name" value="ATPASE_A"/>
    <property type="match status" value="1"/>
</dbReference>
<name>ATP6_RHIE6</name>
<gene>
    <name evidence="1" type="primary">atpB</name>
    <name type="ordered locus">RHECIAT_CH0000954</name>
</gene>
<proteinExistence type="inferred from homology"/>
<organism>
    <name type="scientific">Rhizobium etli (strain CIAT 652)</name>
    <dbReference type="NCBI Taxonomy" id="491916"/>
    <lineage>
        <taxon>Bacteria</taxon>
        <taxon>Pseudomonadati</taxon>
        <taxon>Pseudomonadota</taxon>
        <taxon>Alphaproteobacteria</taxon>
        <taxon>Hyphomicrobiales</taxon>
        <taxon>Rhizobiaceae</taxon>
        <taxon>Rhizobium/Agrobacterium group</taxon>
        <taxon>Rhizobium</taxon>
    </lineage>
</organism>
<accession>B3PRF6</accession>
<protein>
    <recommendedName>
        <fullName evidence="1">ATP synthase subunit a</fullName>
    </recommendedName>
    <alternativeName>
        <fullName evidence="1">ATP synthase F0 sector subunit a</fullName>
    </alternativeName>
    <alternativeName>
        <fullName evidence="1">F-ATPase subunit 6</fullName>
    </alternativeName>
</protein>
<feature type="chain" id="PRO_0000362409" description="ATP synthase subunit a">
    <location>
        <begin position="1"/>
        <end position="250"/>
    </location>
</feature>
<feature type="transmembrane region" description="Helical" evidence="1">
    <location>
        <begin position="29"/>
        <end position="49"/>
    </location>
</feature>
<feature type="transmembrane region" description="Helical" evidence="1">
    <location>
        <begin position="84"/>
        <end position="104"/>
    </location>
</feature>
<feature type="transmembrane region" description="Helical" evidence="1">
    <location>
        <begin position="114"/>
        <end position="134"/>
    </location>
</feature>
<feature type="transmembrane region" description="Helical" evidence="1">
    <location>
        <begin position="143"/>
        <end position="163"/>
    </location>
</feature>
<feature type="transmembrane region" description="Helical" evidence="1">
    <location>
        <begin position="193"/>
        <end position="213"/>
    </location>
</feature>
<feature type="transmembrane region" description="Helical" evidence="1">
    <location>
        <begin position="216"/>
        <end position="236"/>
    </location>
</feature>
<reference key="1">
    <citation type="journal article" date="2010" name="Appl. Environ. Microbiol.">
        <title>Conserved symbiotic plasmid DNA sequences in the multireplicon pangenomic structure of Rhizobium etli.</title>
        <authorList>
            <person name="Gonzalez V."/>
            <person name="Acosta J.L."/>
            <person name="Santamaria R.I."/>
            <person name="Bustos P."/>
            <person name="Fernandez J.L."/>
            <person name="Hernandez Gonzalez I.L."/>
            <person name="Diaz R."/>
            <person name="Flores M."/>
            <person name="Palacios R."/>
            <person name="Mora J."/>
            <person name="Davila G."/>
        </authorList>
    </citation>
    <scope>NUCLEOTIDE SEQUENCE [LARGE SCALE GENOMIC DNA]</scope>
    <source>
        <strain>CIAT 652</strain>
    </source>
</reference>
<evidence type="ECO:0000255" key="1">
    <source>
        <dbReference type="HAMAP-Rule" id="MF_01393"/>
    </source>
</evidence>
<comment type="function">
    <text evidence="1">Key component of the proton channel; it plays a direct role in the translocation of protons across the membrane.</text>
</comment>
<comment type="subunit">
    <text evidence="1">F-type ATPases have 2 components, CF(1) - the catalytic core - and CF(0) - the membrane proton channel. CF(1) has five subunits: alpha(3), beta(3), gamma(1), delta(1), epsilon(1). CF(0) has three main subunits: a(1), b(2) and c(9-12). The alpha and beta chains form an alternating ring which encloses part of the gamma chain. CF(1) is attached to CF(0) by a central stalk formed by the gamma and epsilon chains, while a peripheral stalk is formed by the delta and b chains.</text>
</comment>
<comment type="subcellular location">
    <subcellularLocation>
        <location evidence="1">Cell inner membrane</location>
        <topology evidence="1">Multi-pass membrane protein</topology>
    </subcellularLocation>
</comment>
<comment type="similarity">
    <text evidence="1">Belongs to the ATPase A chain family.</text>
</comment>